<organism>
    <name type="scientific">Paraburkholderia phymatum (strain DSM 17167 / CIP 108236 / LMG 21445 / STM815)</name>
    <name type="common">Burkholderia phymatum</name>
    <dbReference type="NCBI Taxonomy" id="391038"/>
    <lineage>
        <taxon>Bacteria</taxon>
        <taxon>Pseudomonadati</taxon>
        <taxon>Pseudomonadota</taxon>
        <taxon>Betaproteobacteria</taxon>
        <taxon>Burkholderiales</taxon>
        <taxon>Burkholderiaceae</taxon>
        <taxon>Paraburkholderia</taxon>
    </lineage>
</organism>
<feature type="chain" id="PRO_1000130835" description="UDP-N-acetylmuramoylalanine--D-glutamate ligase">
    <location>
        <begin position="1"/>
        <end position="504"/>
    </location>
</feature>
<feature type="region of interest" description="Disordered" evidence="2">
    <location>
        <begin position="284"/>
        <end position="310"/>
    </location>
</feature>
<feature type="binding site" evidence="1">
    <location>
        <begin position="132"/>
        <end position="138"/>
    </location>
    <ligand>
        <name>ATP</name>
        <dbReference type="ChEBI" id="CHEBI:30616"/>
    </ligand>
</feature>
<gene>
    <name evidence="1" type="primary">murD</name>
    <name type="ordered locus">Bphy_2675</name>
</gene>
<proteinExistence type="inferred from homology"/>
<reference key="1">
    <citation type="journal article" date="2014" name="Stand. Genomic Sci.">
        <title>Complete genome sequence of Burkholderia phymatum STM815(T), a broad host range and efficient nitrogen-fixing symbiont of Mimosa species.</title>
        <authorList>
            <person name="Moulin L."/>
            <person name="Klonowska A."/>
            <person name="Caroline B."/>
            <person name="Booth K."/>
            <person name="Vriezen J.A."/>
            <person name="Melkonian R."/>
            <person name="James E.K."/>
            <person name="Young J.P."/>
            <person name="Bena G."/>
            <person name="Hauser L."/>
            <person name="Land M."/>
            <person name="Kyrpides N."/>
            <person name="Bruce D."/>
            <person name="Chain P."/>
            <person name="Copeland A."/>
            <person name="Pitluck S."/>
            <person name="Woyke T."/>
            <person name="Lizotte-Waniewski M."/>
            <person name="Bristow J."/>
            <person name="Riley M."/>
        </authorList>
    </citation>
    <scope>NUCLEOTIDE SEQUENCE [LARGE SCALE GENOMIC DNA]</scope>
    <source>
        <strain>DSM 17167 / CIP 108236 / LMG 21445 / STM815</strain>
    </source>
</reference>
<evidence type="ECO:0000255" key="1">
    <source>
        <dbReference type="HAMAP-Rule" id="MF_00639"/>
    </source>
</evidence>
<evidence type="ECO:0000256" key="2">
    <source>
        <dbReference type="SAM" id="MobiDB-lite"/>
    </source>
</evidence>
<keyword id="KW-0067">ATP-binding</keyword>
<keyword id="KW-0131">Cell cycle</keyword>
<keyword id="KW-0132">Cell division</keyword>
<keyword id="KW-0133">Cell shape</keyword>
<keyword id="KW-0961">Cell wall biogenesis/degradation</keyword>
<keyword id="KW-0963">Cytoplasm</keyword>
<keyword id="KW-0436">Ligase</keyword>
<keyword id="KW-0547">Nucleotide-binding</keyword>
<keyword id="KW-0573">Peptidoglycan synthesis</keyword>
<keyword id="KW-1185">Reference proteome</keyword>
<dbReference type="EC" id="6.3.2.9" evidence="1"/>
<dbReference type="EMBL" id="CP001043">
    <property type="protein sequence ID" value="ACC71847.1"/>
    <property type="molecule type" value="Genomic_DNA"/>
</dbReference>
<dbReference type="RefSeq" id="WP_012402046.1">
    <property type="nucleotide sequence ID" value="NC_010622.1"/>
</dbReference>
<dbReference type="SMR" id="B2JHG2"/>
<dbReference type="STRING" id="391038.Bphy_2675"/>
<dbReference type="KEGG" id="bph:Bphy_2675"/>
<dbReference type="eggNOG" id="COG0771">
    <property type="taxonomic scope" value="Bacteria"/>
</dbReference>
<dbReference type="HOGENOM" id="CLU_032540_1_1_4"/>
<dbReference type="OrthoDB" id="9809796at2"/>
<dbReference type="UniPathway" id="UPA00219"/>
<dbReference type="Proteomes" id="UP000001192">
    <property type="component" value="Chromosome 1"/>
</dbReference>
<dbReference type="GO" id="GO:0005737">
    <property type="term" value="C:cytoplasm"/>
    <property type="evidence" value="ECO:0007669"/>
    <property type="project" value="UniProtKB-SubCell"/>
</dbReference>
<dbReference type="GO" id="GO:0005524">
    <property type="term" value="F:ATP binding"/>
    <property type="evidence" value="ECO:0007669"/>
    <property type="project" value="UniProtKB-UniRule"/>
</dbReference>
<dbReference type="GO" id="GO:0008764">
    <property type="term" value="F:UDP-N-acetylmuramoylalanine-D-glutamate ligase activity"/>
    <property type="evidence" value="ECO:0007669"/>
    <property type="project" value="UniProtKB-UniRule"/>
</dbReference>
<dbReference type="GO" id="GO:0051301">
    <property type="term" value="P:cell division"/>
    <property type="evidence" value="ECO:0007669"/>
    <property type="project" value="UniProtKB-KW"/>
</dbReference>
<dbReference type="GO" id="GO:0071555">
    <property type="term" value="P:cell wall organization"/>
    <property type="evidence" value="ECO:0007669"/>
    <property type="project" value="UniProtKB-KW"/>
</dbReference>
<dbReference type="GO" id="GO:0009252">
    <property type="term" value="P:peptidoglycan biosynthetic process"/>
    <property type="evidence" value="ECO:0007669"/>
    <property type="project" value="UniProtKB-UniRule"/>
</dbReference>
<dbReference type="GO" id="GO:0008360">
    <property type="term" value="P:regulation of cell shape"/>
    <property type="evidence" value="ECO:0007669"/>
    <property type="project" value="UniProtKB-KW"/>
</dbReference>
<dbReference type="Gene3D" id="3.90.190.20">
    <property type="entry name" value="Mur ligase, C-terminal domain"/>
    <property type="match status" value="1"/>
</dbReference>
<dbReference type="Gene3D" id="3.40.1190.10">
    <property type="entry name" value="Mur-like, catalytic domain"/>
    <property type="match status" value="1"/>
</dbReference>
<dbReference type="Gene3D" id="3.40.50.720">
    <property type="entry name" value="NAD(P)-binding Rossmann-like Domain"/>
    <property type="match status" value="1"/>
</dbReference>
<dbReference type="HAMAP" id="MF_00639">
    <property type="entry name" value="MurD"/>
    <property type="match status" value="1"/>
</dbReference>
<dbReference type="InterPro" id="IPR036565">
    <property type="entry name" value="Mur-like_cat_sf"/>
</dbReference>
<dbReference type="InterPro" id="IPR004101">
    <property type="entry name" value="Mur_ligase_C"/>
</dbReference>
<dbReference type="InterPro" id="IPR036615">
    <property type="entry name" value="Mur_ligase_C_dom_sf"/>
</dbReference>
<dbReference type="InterPro" id="IPR013221">
    <property type="entry name" value="Mur_ligase_cen"/>
</dbReference>
<dbReference type="InterPro" id="IPR005762">
    <property type="entry name" value="MurD"/>
</dbReference>
<dbReference type="NCBIfam" id="TIGR01087">
    <property type="entry name" value="murD"/>
    <property type="match status" value="1"/>
</dbReference>
<dbReference type="PANTHER" id="PTHR43692">
    <property type="entry name" value="UDP-N-ACETYLMURAMOYLALANINE--D-GLUTAMATE LIGASE"/>
    <property type="match status" value="1"/>
</dbReference>
<dbReference type="PANTHER" id="PTHR43692:SF1">
    <property type="entry name" value="UDP-N-ACETYLMURAMOYLALANINE--D-GLUTAMATE LIGASE"/>
    <property type="match status" value="1"/>
</dbReference>
<dbReference type="Pfam" id="PF02875">
    <property type="entry name" value="Mur_ligase_C"/>
    <property type="match status" value="1"/>
</dbReference>
<dbReference type="Pfam" id="PF08245">
    <property type="entry name" value="Mur_ligase_M"/>
    <property type="match status" value="1"/>
</dbReference>
<dbReference type="Pfam" id="PF21799">
    <property type="entry name" value="MurD-like_N"/>
    <property type="match status" value="1"/>
</dbReference>
<dbReference type="SUPFAM" id="SSF51984">
    <property type="entry name" value="MurCD N-terminal domain"/>
    <property type="match status" value="1"/>
</dbReference>
<dbReference type="SUPFAM" id="SSF53623">
    <property type="entry name" value="MurD-like peptide ligases, catalytic domain"/>
    <property type="match status" value="1"/>
</dbReference>
<dbReference type="SUPFAM" id="SSF53244">
    <property type="entry name" value="MurD-like peptide ligases, peptide-binding domain"/>
    <property type="match status" value="1"/>
</dbReference>
<comment type="function">
    <text evidence="1">Cell wall formation. Catalyzes the addition of glutamate to the nucleotide precursor UDP-N-acetylmuramoyl-L-alanine (UMA).</text>
</comment>
<comment type="catalytic activity">
    <reaction evidence="1">
        <text>UDP-N-acetyl-alpha-D-muramoyl-L-alanine + D-glutamate + ATP = UDP-N-acetyl-alpha-D-muramoyl-L-alanyl-D-glutamate + ADP + phosphate + H(+)</text>
        <dbReference type="Rhea" id="RHEA:16429"/>
        <dbReference type="ChEBI" id="CHEBI:15378"/>
        <dbReference type="ChEBI" id="CHEBI:29986"/>
        <dbReference type="ChEBI" id="CHEBI:30616"/>
        <dbReference type="ChEBI" id="CHEBI:43474"/>
        <dbReference type="ChEBI" id="CHEBI:83898"/>
        <dbReference type="ChEBI" id="CHEBI:83900"/>
        <dbReference type="ChEBI" id="CHEBI:456216"/>
        <dbReference type="EC" id="6.3.2.9"/>
    </reaction>
</comment>
<comment type="pathway">
    <text evidence="1">Cell wall biogenesis; peptidoglycan biosynthesis.</text>
</comment>
<comment type="subcellular location">
    <subcellularLocation>
        <location evidence="1">Cytoplasm</location>
    </subcellularLocation>
</comment>
<comment type="similarity">
    <text evidence="1">Belongs to the MurCDEF family.</text>
</comment>
<protein>
    <recommendedName>
        <fullName evidence="1">UDP-N-acetylmuramoylalanine--D-glutamate ligase</fullName>
        <ecNumber evidence="1">6.3.2.9</ecNumber>
    </recommendedName>
    <alternativeName>
        <fullName evidence="1">D-glutamic acid-adding enzyme</fullName>
    </alternativeName>
    <alternativeName>
        <fullName evidence="1">UDP-N-acetylmuramoyl-L-alanyl-D-glutamate synthetase</fullName>
    </alternativeName>
</protein>
<sequence length="504" mass="53533">MFGEKFRDRQKPMVLVLGLGESGLAMARWCARHGCRLRIADTREVPPNLSALEAHGIEGNFVGGPFSEVLLEGVELVAISPGLSPLAADLVPLIATARERGIPVWGELEFFAQALKTLGESGYAPKVIAITGTNGKTTTTSLTGLLCERAGKKVAVAGNISPAALDKLTEAIDNTALPDVWVLELSSFQLETAHTFEPDAAVILNITQDHLDWHGGLDAYAAAKGKIFGKNTVRVLNRDDARVMTLASSEQSGAQLVTFGVNEPVRDGDYGLLRDNGMIWLVQAQDRDATDEPAPTRRRKSESTAPPDIGLKRLMPADALRIRGLHNATNALAAFALARAIGLPGAPLLHGLREYRGEPHRVELIASIEGVDYVDDSKGTNVGATVAALDGLAQRVVLIAGGDGKGQAFDPLAEPVTRWCRCVMLIGRDAPQIRAALEHTGIAITDHATLEEATRAASAVAQPGDAVLLSPACASFDMFKGYAHRAAVFRSTVEDIAAGRGTMI</sequence>
<name>MURD_PARP8</name>
<accession>B2JHG2</accession>